<evidence type="ECO:0000255" key="1">
    <source>
        <dbReference type="HAMAP-Rule" id="MF_00040"/>
    </source>
</evidence>
<proteinExistence type="inferred from homology"/>
<accession>B5R3I5</accession>
<dbReference type="EMBL" id="AM933172">
    <property type="protein sequence ID" value="CAR31814.1"/>
    <property type="molecule type" value="Genomic_DNA"/>
</dbReference>
<dbReference type="RefSeq" id="WP_000622423.1">
    <property type="nucleotide sequence ID" value="NC_011294.1"/>
</dbReference>
<dbReference type="SMR" id="B5R3I5"/>
<dbReference type="KEGG" id="set:SEN0226"/>
<dbReference type="HOGENOM" id="CLU_073981_2_1_6"/>
<dbReference type="Proteomes" id="UP000000613">
    <property type="component" value="Chromosome"/>
</dbReference>
<dbReference type="GO" id="GO:0005829">
    <property type="term" value="C:cytosol"/>
    <property type="evidence" value="ECO:0007669"/>
    <property type="project" value="GOC"/>
</dbReference>
<dbReference type="GO" id="GO:0043023">
    <property type="term" value="F:ribosomal large subunit binding"/>
    <property type="evidence" value="ECO:0007669"/>
    <property type="project" value="TreeGrafter"/>
</dbReference>
<dbReference type="GO" id="GO:0002184">
    <property type="term" value="P:cytoplasmic translational termination"/>
    <property type="evidence" value="ECO:0007669"/>
    <property type="project" value="TreeGrafter"/>
</dbReference>
<dbReference type="CDD" id="cd00520">
    <property type="entry name" value="RRF"/>
    <property type="match status" value="1"/>
</dbReference>
<dbReference type="FunFam" id="1.10.132.20:FF:000001">
    <property type="entry name" value="Ribosome-recycling factor"/>
    <property type="match status" value="1"/>
</dbReference>
<dbReference type="FunFam" id="3.30.1360.40:FF:000001">
    <property type="entry name" value="Ribosome-recycling factor"/>
    <property type="match status" value="1"/>
</dbReference>
<dbReference type="Gene3D" id="3.30.1360.40">
    <property type="match status" value="1"/>
</dbReference>
<dbReference type="Gene3D" id="1.10.132.20">
    <property type="entry name" value="Ribosome-recycling factor"/>
    <property type="match status" value="1"/>
</dbReference>
<dbReference type="HAMAP" id="MF_00040">
    <property type="entry name" value="RRF"/>
    <property type="match status" value="1"/>
</dbReference>
<dbReference type="InterPro" id="IPR002661">
    <property type="entry name" value="Ribosome_recyc_fac"/>
</dbReference>
<dbReference type="InterPro" id="IPR023584">
    <property type="entry name" value="Ribosome_recyc_fac_dom"/>
</dbReference>
<dbReference type="InterPro" id="IPR036191">
    <property type="entry name" value="RRF_sf"/>
</dbReference>
<dbReference type="NCBIfam" id="TIGR00496">
    <property type="entry name" value="frr"/>
    <property type="match status" value="1"/>
</dbReference>
<dbReference type="PANTHER" id="PTHR20982:SF3">
    <property type="entry name" value="MITOCHONDRIAL RIBOSOME RECYCLING FACTOR PSEUDO 1"/>
    <property type="match status" value="1"/>
</dbReference>
<dbReference type="PANTHER" id="PTHR20982">
    <property type="entry name" value="RIBOSOME RECYCLING FACTOR"/>
    <property type="match status" value="1"/>
</dbReference>
<dbReference type="Pfam" id="PF01765">
    <property type="entry name" value="RRF"/>
    <property type="match status" value="1"/>
</dbReference>
<dbReference type="SUPFAM" id="SSF55194">
    <property type="entry name" value="Ribosome recycling factor, RRF"/>
    <property type="match status" value="1"/>
</dbReference>
<reference key="1">
    <citation type="journal article" date="2008" name="Genome Res.">
        <title>Comparative genome analysis of Salmonella enteritidis PT4 and Salmonella gallinarum 287/91 provides insights into evolutionary and host adaptation pathways.</title>
        <authorList>
            <person name="Thomson N.R."/>
            <person name="Clayton D.J."/>
            <person name="Windhorst D."/>
            <person name="Vernikos G."/>
            <person name="Davidson S."/>
            <person name="Churcher C."/>
            <person name="Quail M.A."/>
            <person name="Stevens M."/>
            <person name="Jones M.A."/>
            <person name="Watson M."/>
            <person name="Barron A."/>
            <person name="Layton A."/>
            <person name="Pickard D."/>
            <person name="Kingsley R.A."/>
            <person name="Bignell A."/>
            <person name="Clark L."/>
            <person name="Harris B."/>
            <person name="Ormond D."/>
            <person name="Abdellah Z."/>
            <person name="Brooks K."/>
            <person name="Cherevach I."/>
            <person name="Chillingworth T."/>
            <person name="Woodward J."/>
            <person name="Norberczak H."/>
            <person name="Lord A."/>
            <person name="Arrowsmith C."/>
            <person name="Jagels K."/>
            <person name="Moule S."/>
            <person name="Mungall K."/>
            <person name="Saunders M."/>
            <person name="Whitehead S."/>
            <person name="Chabalgoity J.A."/>
            <person name="Maskell D."/>
            <person name="Humphreys T."/>
            <person name="Roberts M."/>
            <person name="Barrow P.A."/>
            <person name="Dougan G."/>
            <person name="Parkhill J."/>
        </authorList>
    </citation>
    <scope>NUCLEOTIDE SEQUENCE [LARGE SCALE GENOMIC DNA]</scope>
    <source>
        <strain>P125109</strain>
    </source>
</reference>
<gene>
    <name evidence="1" type="primary">frr</name>
    <name type="ordered locus">SEN0226</name>
</gene>
<comment type="function">
    <text evidence="1">Responsible for the release of ribosomes from messenger RNA at the termination of protein biosynthesis. May increase the efficiency of translation by recycling ribosomes from one round of translation to another.</text>
</comment>
<comment type="subcellular location">
    <subcellularLocation>
        <location evidence="1">Cytoplasm</location>
    </subcellularLocation>
</comment>
<comment type="similarity">
    <text evidence="1">Belongs to the RRF family.</text>
</comment>
<name>RRF_SALEP</name>
<organism>
    <name type="scientific">Salmonella enteritidis PT4 (strain P125109)</name>
    <dbReference type="NCBI Taxonomy" id="550537"/>
    <lineage>
        <taxon>Bacteria</taxon>
        <taxon>Pseudomonadati</taxon>
        <taxon>Pseudomonadota</taxon>
        <taxon>Gammaproteobacteria</taxon>
        <taxon>Enterobacterales</taxon>
        <taxon>Enterobacteriaceae</taxon>
        <taxon>Salmonella</taxon>
    </lineage>
</organism>
<protein>
    <recommendedName>
        <fullName evidence="1">Ribosome-recycling factor</fullName>
        <shortName evidence="1">RRF</shortName>
    </recommendedName>
    <alternativeName>
        <fullName evidence="1">Ribosome-releasing factor</fullName>
    </alternativeName>
</protein>
<feature type="chain" id="PRO_1000090780" description="Ribosome-recycling factor">
    <location>
        <begin position="1"/>
        <end position="185"/>
    </location>
</feature>
<keyword id="KW-0963">Cytoplasm</keyword>
<keyword id="KW-0648">Protein biosynthesis</keyword>
<sequence>MISDIRKDAEVRMEKCVEAFKTQISKVRTGRASPSLLDGIVVEYYGTPTPLRQLASVTVEDSRTLKINVFDRSMGPAVEKAIMASDLGLNPSSAGTDIRVPLPPLTEERRKDLTKIVRGEAEQARVAVRNVRRDANDKVKALLKDKAISEDDDRRSQEEVQKMTDAAIKKVDAALADKEAELMQF</sequence>